<name>T2R46_HUMAN</name>
<keyword id="KW-0002">3D-structure</keyword>
<keyword id="KW-1003">Cell membrane</keyword>
<keyword id="KW-0966">Cell projection</keyword>
<keyword id="KW-0969">Cilium</keyword>
<keyword id="KW-0297">G-protein coupled receptor</keyword>
<keyword id="KW-0325">Glycoprotein</keyword>
<keyword id="KW-0472">Membrane</keyword>
<keyword id="KW-0675">Receptor</keyword>
<keyword id="KW-1185">Reference proteome</keyword>
<keyword id="KW-0716">Sensory transduction</keyword>
<keyword id="KW-0919">Taste</keyword>
<keyword id="KW-0807">Transducer</keyword>
<keyword id="KW-0812">Transmembrane</keyword>
<keyword id="KW-1133">Transmembrane helix</keyword>
<organism>
    <name type="scientific">Homo sapiens</name>
    <name type="common">Human</name>
    <dbReference type="NCBI Taxonomy" id="9606"/>
    <lineage>
        <taxon>Eukaryota</taxon>
        <taxon>Metazoa</taxon>
        <taxon>Chordata</taxon>
        <taxon>Craniata</taxon>
        <taxon>Vertebrata</taxon>
        <taxon>Euteleostomi</taxon>
        <taxon>Mammalia</taxon>
        <taxon>Eutheria</taxon>
        <taxon>Euarchontoglires</taxon>
        <taxon>Primates</taxon>
        <taxon>Haplorrhini</taxon>
        <taxon>Catarrhini</taxon>
        <taxon>Hominidae</taxon>
        <taxon>Homo</taxon>
    </lineage>
</organism>
<gene>
    <name type="primary">TAS2R46</name>
</gene>
<reference key="1">
    <citation type="journal article" date="2002" name="Cytogenet. Genome Res.">
        <title>Identification and characterization of human taste receptor genes belonging to the TAS2R family.</title>
        <authorList>
            <person name="Conte C."/>
            <person name="Ebeling M."/>
            <person name="Marcuz A."/>
            <person name="Nef P."/>
            <person name="Andres-Barquin P.J."/>
        </authorList>
    </citation>
    <scope>NUCLEOTIDE SEQUENCE [GENOMIC DNA]</scope>
</reference>
<reference key="2">
    <citation type="journal article" date="2005" name="Mol. Biol. Evol.">
        <title>Evolution of bitter taste receptors in humans and apes.</title>
        <authorList>
            <person name="Fischer A."/>
            <person name="Gilad Y."/>
            <person name="Man O."/>
            <person name="Paeaebo S."/>
        </authorList>
    </citation>
    <scope>NUCLEOTIDE SEQUENCE [GENOMIC DNA]</scope>
    <scope>VARIANT MET-228</scope>
</reference>
<reference key="3">
    <citation type="journal article" date="2002" name="Nat. Genet.">
        <title>The human TAS2R16 receptor mediates bitter taste in response to beta-glucopyranosides.</title>
        <authorList>
            <person name="Bufe B."/>
            <person name="Hofmann T."/>
            <person name="Krautwurst D."/>
            <person name="Raguse J.-D."/>
            <person name="Meyerhof W."/>
        </authorList>
    </citation>
    <scope>NUCLEOTIDE SEQUENCE [GENOMIC DNA] OF 1-299</scope>
</reference>
<reference key="4">
    <citation type="journal article" date="2002" name="Curr. Opin. Neurobiol.">
        <title>Receptors for bitter and sweet taste.</title>
        <authorList>
            <person name="Montmayeur J.-P."/>
            <person name="Matsunami H."/>
        </authorList>
    </citation>
    <scope>REVIEW</scope>
</reference>
<reference key="5">
    <citation type="journal article" date="2002" name="J. Biol. Chem.">
        <title>Molecular mechanisms of bitter and sweet taste transduction.</title>
        <authorList>
            <person name="Margolskee R.F."/>
        </authorList>
    </citation>
    <scope>REVIEW</scope>
</reference>
<reference key="6">
    <citation type="journal article" date="2003" name="Cell">
        <title>Coding of sweet, bitter, and umami tastes: different receptor cells sharing similar signaling pathways.</title>
        <authorList>
            <person name="Zhang Y."/>
            <person name="Hoon M.A."/>
            <person name="Chandrashekar J."/>
            <person name="Mueller K.L."/>
            <person name="Cook B."/>
            <person name="Wu D."/>
            <person name="Zuker C.S."/>
            <person name="Ryba N.J."/>
        </authorList>
    </citation>
    <scope>REVIEW</scope>
</reference>
<reference key="7">
    <citation type="journal article" date="2009" name="Science">
        <title>Motile cilia of human airway epithelia are chemosensory.</title>
        <authorList>
            <person name="Shah A.S."/>
            <person name="Ben-Shahar Y."/>
            <person name="Moninger T.O."/>
            <person name="Kline J.N."/>
            <person name="Welsh M.J."/>
        </authorList>
    </citation>
    <scope>SUBCELLULAR LOCATION</scope>
    <scope>TISSUE SPECIFICITY</scope>
</reference>
<feature type="chain" id="PRO_0000082318" description="Taste receptor type 2 member 46">
    <location>
        <begin position="1"/>
        <end position="309"/>
    </location>
</feature>
<feature type="topological domain" description="Extracellular" evidence="2">
    <location>
        <position position="1"/>
    </location>
</feature>
<feature type="transmembrane region" description="Helical; Name=1" evidence="2">
    <location>
        <begin position="2"/>
        <end position="22"/>
    </location>
</feature>
<feature type="topological domain" description="Cytoplasmic" evidence="2">
    <location>
        <begin position="23"/>
        <end position="46"/>
    </location>
</feature>
<feature type="transmembrane region" description="Helical; Name=2" evidence="2">
    <location>
        <begin position="47"/>
        <end position="67"/>
    </location>
</feature>
<feature type="topological domain" description="Extracellular" evidence="2">
    <location>
        <begin position="68"/>
        <end position="86"/>
    </location>
</feature>
<feature type="transmembrane region" description="Helical; Name=3" evidence="2">
    <location>
        <begin position="87"/>
        <end position="107"/>
    </location>
</feature>
<feature type="topological domain" description="Cytoplasmic" evidence="2">
    <location>
        <begin position="108"/>
        <end position="126"/>
    </location>
</feature>
<feature type="transmembrane region" description="Helical; Name=4" evidence="2">
    <location>
        <begin position="127"/>
        <end position="147"/>
    </location>
</feature>
<feature type="topological domain" description="Extracellular" evidence="2">
    <location>
        <begin position="148"/>
        <end position="178"/>
    </location>
</feature>
<feature type="transmembrane region" description="Helical; Name=5" evidence="2">
    <location>
        <begin position="179"/>
        <end position="199"/>
    </location>
</feature>
<feature type="topological domain" description="Cytoplasmic" evidence="2">
    <location>
        <begin position="200"/>
        <end position="229"/>
    </location>
</feature>
<feature type="transmembrane region" description="Helical; Name=6" evidence="2">
    <location>
        <begin position="230"/>
        <end position="250"/>
    </location>
</feature>
<feature type="topological domain" description="Extracellular" evidence="2">
    <location>
        <begin position="251"/>
        <end position="259"/>
    </location>
</feature>
<feature type="transmembrane region" description="Helical; Name=7" evidence="2">
    <location>
        <begin position="260"/>
        <end position="280"/>
    </location>
</feature>
<feature type="topological domain" description="Cytoplasmic" evidence="2">
    <location>
        <begin position="281"/>
        <end position="309"/>
    </location>
</feature>
<feature type="glycosylation site" description="N-linked (GlcNAc...) asparagine" evidence="2">
    <location>
        <position position="161"/>
    </location>
</feature>
<feature type="glycosylation site" description="N-linked (GlcNAc...) asparagine" evidence="2">
    <location>
        <position position="176"/>
    </location>
</feature>
<feature type="sequence variant" id="VAR_062091" description="In dbSNP:rs2708380." evidence="3">
    <original>L</original>
    <variation>M</variation>
    <location>
        <position position="228"/>
    </location>
</feature>
<feature type="sequence conflict" description="In Ref. 3." evidence="5" ref="3">
    <original>HV</original>
    <variation>QM</variation>
    <location>
        <begin position="296"/>
        <end position="297"/>
    </location>
</feature>
<feature type="helix" evidence="6">
    <location>
        <begin position="5"/>
        <end position="38"/>
    </location>
</feature>
<feature type="helix" evidence="6">
    <location>
        <begin position="43"/>
        <end position="69"/>
    </location>
</feature>
<feature type="turn" evidence="7">
    <location>
        <begin position="73"/>
        <end position="75"/>
    </location>
</feature>
<feature type="helix" evidence="6">
    <location>
        <begin position="78"/>
        <end position="110"/>
    </location>
</feature>
<feature type="helix" evidence="6">
    <location>
        <begin position="116"/>
        <end position="123"/>
    </location>
</feature>
<feature type="helix" evidence="6">
    <location>
        <begin position="125"/>
        <end position="150"/>
    </location>
</feature>
<feature type="helix" evidence="6">
    <location>
        <begin position="156"/>
        <end position="159"/>
    </location>
</feature>
<feature type="helix" evidence="6">
    <location>
        <begin position="166"/>
        <end position="172"/>
    </location>
</feature>
<feature type="turn" evidence="6">
    <location>
        <begin position="173"/>
        <end position="175"/>
    </location>
</feature>
<feature type="helix" evidence="6">
    <location>
        <begin position="177"/>
        <end position="212"/>
    </location>
</feature>
<feature type="strand" evidence="7">
    <location>
        <begin position="216"/>
        <end position="218"/>
    </location>
</feature>
<feature type="helix" evidence="6">
    <location>
        <begin position="219"/>
        <end position="249"/>
    </location>
</feature>
<feature type="turn" evidence="6">
    <location>
        <begin position="255"/>
        <end position="257"/>
    </location>
</feature>
<feature type="helix" evidence="6">
    <location>
        <begin position="258"/>
        <end position="282"/>
    </location>
</feature>
<feature type="helix" evidence="6">
    <location>
        <begin position="284"/>
        <end position="300"/>
    </location>
</feature>
<protein>
    <recommendedName>
        <fullName>Taste receptor type 2 member 46</fullName>
        <shortName>T2R46</shortName>
    </recommendedName>
    <alternativeName>
        <fullName>Taste receptor type 2 member 54</fullName>
        <shortName>T2R54</shortName>
    </alternativeName>
</protein>
<accession>P59540</accession>
<accession>P59548</accession>
<accession>Q645X6</accession>
<dbReference type="EMBL" id="AY114091">
    <property type="protein sequence ID" value="AAM63541.1"/>
    <property type="molecule type" value="Genomic_DNA"/>
</dbReference>
<dbReference type="EMBL" id="AY724941">
    <property type="protein sequence ID" value="AAU21143.1"/>
    <property type="molecule type" value="Genomic_DNA"/>
</dbReference>
<dbReference type="EMBL" id="AF494227">
    <property type="protein sequence ID" value="AAM19318.1"/>
    <property type="molecule type" value="Genomic_DNA"/>
</dbReference>
<dbReference type="CCDS" id="CCDS53748.1"/>
<dbReference type="RefSeq" id="NP_795368.2">
    <property type="nucleotide sequence ID" value="NM_176887.2"/>
</dbReference>
<dbReference type="PDB" id="7XP4">
    <property type="method" value="EM"/>
    <property type="resolution" value="3.01 A"/>
    <property type="chains" value="R=2-309"/>
</dbReference>
<dbReference type="PDB" id="7XP5">
    <property type="method" value="EM"/>
    <property type="resolution" value="3.08 A"/>
    <property type="chains" value="R=2-309"/>
</dbReference>
<dbReference type="PDB" id="7XP6">
    <property type="method" value="EM"/>
    <property type="resolution" value="3.01 A"/>
    <property type="chains" value="R=2-309"/>
</dbReference>
<dbReference type="PDBsum" id="7XP4"/>
<dbReference type="PDBsum" id="7XP5"/>
<dbReference type="PDBsum" id="7XP6"/>
<dbReference type="EMDB" id="EMD-33364"/>
<dbReference type="EMDB" id="EMD-33365"/>
<dbReference type="EMDB" id="EMD-33366"/>
<dbReference type="SMR" id="P59540"/>
<dbReference type="FunCoup" id="P59540">
    <property type="interactions" value="248"/>
</dbReference>
<dbReference type="STRING" id="9606.ENSP00000436450"/>
<dbReference type="ChEMBL" id="CHEMBL4523253"/>
<dbReference type="DrugCentral" id="P59540"/>
<dbReference type="GuidetoPHARMACOLOGY" id="679"/>
<dbReference type="TCDB" id="9.A.14.17.6">
    <property type="family name" value="the g-protein-coupled receptor (gpcr) family"/>
</dbReference>
<dbReference type="GlyCosmos" id="P59540">
    <property type="glycosylation" value="2 sites, No reported glycans"/>
</dbReference>
<dbReference type="GlyGen" id="P59540">
    <property type="glycosylation" value="2 sites"/>
</dbReference>
<dbReference type="iPTMnet" id="P59540"/>
<dbReference type="PhosphoSitePlus" id="P59540"/>
<dbReference type="BioMuta" id="TAS2R46"/>
<dbReference type="DMDM" id="55977809"/>
<dbReference type="PaxDb" id="9606-ENSP00000436450"/>
<dbReference type="Antibodypedia" id="23423">
    <property type="antibodies" value="26 antibodies from 10 providers"/>
</dbReference>
<dbReference type="DNASU" id="259292"/>
<dbReference type="Ensembl" id="ENST00000533467.1">
    <property type="protein sequence ID" value="ENSP00000436450.1"/>
    <property type="gene ID" value="ENSG00000226761.3"/>
</dbReference>
<dbReference type="Ensembl" id="ENST00000574263.1">
    <property type="protein sequence ID" value="ENSP00000460229.1"/>
    <property type="gene ID" value="ENSG00000262525.3"/>
</dbReference>
<dbReference type="GeneID" id="259292"/>
<dbReference type="KEGG" id="hsa:259292"/>
<dbReference type="MANE-Select" id="ENST00000533467.1">
    <property type="protein sequence ID" value="ENSP00000436450.1"/>
    <property type="RefSeq nucleotide sequence ID" value="NM_176887.2"/>
    <property type="RefSeq protein sequence ID" value="NP_795368.2"/>
</dbReference>
<dbReference type="UCSC" id="uc001qzp.1">
    <property type="organism name" value="human"/>
</dbReference>
<dbReference type="AGR" id="HGNC:18877"/>
<dbReference type="CTD" id="259292"/>
<dbReference type="DisGeNET" id="259292"/>
<dbReference type="GeneCards" id="TAS2R46"/>
<dbReference type="HGNC" id="HGNC:18877">
    <property type="gene designation" value="TAS2R46"/>
</dbReference>
<dbReference type="HPA" id="ENSG00000226761">
    <property type="expression patterns" value="Not detected"/>
</dbReference>
<dbReference type="MIM" id="612774">
    <property type="type" value="gene"/>
</dbReference>
<dbReference type="neXtProt" id="NX_P59540"/>
<dbReference type="OpenTargets" id="ENSG00000226761"/>
<dbReference type="PharmGKB" id="PA38731"/>
<dbReference type="VEuPathDB" id="HostDB:ENSG00000226761"/>
<dbReference type="eggNOG" id="ENOG502TE6U">
    <property type="taxonomic scope" value="Eukaryota"/>
</dbReference>
<dbReference type="GeneTree" id="ENSGT01100000263477"/>
<dbReference type="HOGENOM" id="CLU_072337_2_0_1"/>
<dbReference type="InParanoid" id="P59540"/>
<dbReference type="OMA" id="IMISSWS"/>
<dbReference type="OrthoDB" id="9484230at2759"/>
<dbReference type="PAN-GO" id="P59540">
    <property type="GO annotations" value="3 GO annotations based on evolutionary models"/>
</dbReference>
<dbReference type="PhylomeDB" id="P59540"/>
<dbReference type="TreeFam" id="TF335891"/>
<dbReference type="PathwayCommons" id="P59540"/>
<dbReference type="Reactome" id="R-HSA-418594">
    <property type="pathway name" value="G alpha (i) signalling events"/>
</dbReference>
<dbReference type="Reactome" id="R-HSA-420499">
    <property type="pathway name" value="Class C/3 (Metabotropic glutamate/pheromone receptors)"/>
</dbReference>
<dbReference type="Reactome" id="R-HSA-9717207">
    <property type="pathway name" value="Sensory perception of sweet, bitter, and umami (glutamate) taste"/>
</dbReference>
<dbReference type="BioGRID-ORCS" id="259292">
    <property type="hits" value="54 hits in 1106 CRISPR screens"/>
</dbReference>
<dbReference type="GeneWiki" id="TAS2R46"/>
<dbReference type="GenomeRNAi" id="259292"/>
<dbReference type="Pharos" id="P59540">
    <property type="development level" value="Tchem"/>
</dbReference>
<dbReference type="PRO" id="PR:P59540"/>
<dbReference type="Proteomes" id="UP000005640">
    <property type="component" value="Chromosome 12"/>
</dbReference>
<dbReference type="RNAct" id="P59540">
    <property type="molecule type" value="protein"/>
</dbReference>
<dbReference type="Bgee" id="ENSG00000226761">
    <property type="expression patterns" value="Expressed in male germ line stem cell (sensu Vertebrata) in testis and 36 other cell types or tissues"/>
</dbReference>
<dbReference type="GO" id="GO:0060170">
    <property type="term" value="C:ciliary membrane"/>
    <property type="evidence" value="ECO:0007669"/>
    <property type="project" value="UniProtKB-SubCell"/>
</dbReference>
<dbReference type="GO" id="GO:0016020">
    <property type="term" value="C:membrane"/>
    <property type="evidence" value="ECO:0000318"/>
    <property type="project" value="GO_Central"/>
</dbReference>
<dbReference type="GO" id="GO:0005886">
    <property type="term" value="C:plasma membrane"/>
    <property type="evidence" value="ECO:0000304"/>
    <property type="project" value="Reactome"/>
</dbReference>
<dbReference type="GO" id="GO:0033038">
    <property type="term" value="F:bitter taste receptor activity"/>
    <property type="evidence" value="ECO:0000314"/>
    <property type="project" value="UniProtKB"/>
</dbReference>
<dbReference type="GO" id="GO:0004930">
    <property type="term" value="F:G protein-coupled receptor activity"/>
    <property type="evidence" value="ECO:0007669"/>
    <property type="project" value="UniProtKB-KW"/>
</dbReference>
<dbReference type="GO" id="GO:0001580">
    <property type="term" value="P:detection of chemical stimulus involved in sensory perception of bitter taste"/>
    <property type="evidence" value="ECO:0000314"/>
    <property type="project" value="UniProtKB"/>
</dbReference>
<dbReference type="CDD" id="cd15027">
    <property type="entry name" value="7tm_TAS2R43-like"/>
    <property type="match status" value="1"/>
</dbReference>
<dbReference type="FunFam" id="1.20.1070.10:FF:000042">
    <property type="entry name" value="Taste receptor type 2 member 7"/>
    <property type="match status" value="1"/>
</dbReference>
<dbReference type="Gene3D" id="1.20.1070.10">
    <property type="entry name" value="Rhodopsin 7-helix transmembrane proteins"/>
    <property type="match status" value="1"/>
</dbReference>
<dbReference type="InterPro" id="IPR007960">
    <property type="entry name" value="TAS2R"/>
</dbReference>
<dbReference type="PANTHER" id="PTHR11394">
    <property type="entry name" value="TASTE RECEPTOR TYPE 2"/>
    <property type="match status" value="1"/>
</dbReference>
<dbReference type="PANTHER" id="PTHR11394:SF66">
    <property type="entry name" value="TASTE RECEPTOR TYPE 2 MEMBER 46"/>
    <property type="match status" value="1"/>
</dbReference>
<dbReference type="Pfam" id="PF05296">
    <property type="entry name" value="TAS2R"/>
    <property type="match status" value="1"/>
</dbReference>
<dbReference type="SUPFAM" id="SSF81321">
    <property type="entry name" value="Family A G protein-coupled receptor-like"/>
    <property type="match status" value="1"/>
</dbReference>
<comment type="function">
    <text evidence="1">Receptor that may play a role in the perception of bitterness and is gustducin-linked. May play a role in sensing the chemical composition of the gastrointestinal content. The activity of this receptor may stimulate alpha gustducin, mediate PLC-beta-2 activation and lead to the gating of TRPM5 (By similarity). In airway epithelial cells, binding of bitter compounds increases the intracellular calcium ion concentration and stimulates ciliary beat frequency (By similarity).</text>
</comment>
<comment type="subcellular location">
    <subcellularLocation>
        <location evidence="4">Membrane</location>
        <topology evidence="4">Multi-pass membrane protein</topology>
    </subcellularLocation>
    <subcellularLocation>
        <location evidence="4">Cell projection</location>
        <location evidence="4">Cilium membrane</location>
    </subcellularLocation>
    <text>In airway epithelial cells, localizes to motile cilia.</text>
</comment>
<comment type="tissue specificity">
    <text evidence="4">Expressed in subsets of taste receptor cells of the tongue and exclusively in gustducin-positive cells. Expressed on ciliated airway epithelium.</text>
</comment>
<comment type="miscellaneous">
    <text>Most taste cells may be activated by a limited number of bitter compounds; individual taste cells can discriminate among bitter stimuli.</text>
</comment>
<comment type="similarity">
    <text evidence="5">Belongs to the G-protein coupled receptor T2R family.</text>
</comment>
<comment type="online information" name="Protein Spotlight">
    <link uri="https://www.proteinspotlight.org/back_issues/119"/>
    <text>A tail of protection - Issue 119 of July 2010</text>
</comment>
<proteinExistence type="evidence at protein level"/>
<sequence length="309" mass="35523">MITFLPIIFSILIVVTFVIGNFANGFIALVNSIEWFKRQKISFADQILTALAVSRVGLLWVLVLNWYATELNPAFNSIEVRITAYNVWAVINHFSNWLATSLSIFYLLKIANFSNLIFLHLKRRVKSVVLVILLGPLLFLVCHLFVINMNQIIWTKEYEGNMTWKIKLRSAMYLSNTTVTILANLVPFTLTLISFLLLICSLCKHLKKMQLHGKGSQDPSMKVHIKALQTVTSFLLLCAIYFLSIIMSVWSFESLENKPVFMFCEAIAFSYPSTHPFILIWGNKKLKQTFLSVLWHVRYWVKGEKPSSS</sequence>
<evidence type="ECO:0000250" key="1"/>
<evidence type="ECO:0000255" key="2"/>
<evidence type="ECO:0000269" key="3">
    <source>
    </source>
</evidence>
<evidence type="ECO:0000269" key="4">
    <source>
    </source>
</evidence>
<evidence type="ECO:0000305" key="5"/>
<evidence type="ECO:0007829" key="6">
    <source>
        <dbReference type="PDB" id="7XP4"/>
    </source>
</evidence>
<evidence type="ECO:0007829" key="7">
    <source>
        <dbReference type="PDB" id="7XP6"/>
    </source>
</evidence>